<protein>
    <recommendedName>
        <fullName evidence="5">Encapsulin nanocompartment cargo protein EncD</fullName>
    </recommendedName>
</protein>
<proteinExistence type="evidence at protein level"/>
<dbReference type="EMBL" id="CP000113">
    <property type="protein sequence ID" value="ABF90650.1"/>
    <property type="molecule type" value="Genomic_DNA"/>
</dbReference>
<dbReference type="RefSeq" id="WP_011552485.1">
    <property type="nucleotide sequence ID" value="NC_008095.1"/>
</dbReference>
<dbReference type="PDB" id="8VJN">
    <property type="method" value="X-ray"/>
    <property type="resolution" value="2.31 A"/>
    <property type="chains" value="A/B/C/D=1-59"/>
</dbReference>
<dbReference type="PDB" id="8VJO">
    <property type="method" value="EM"/>
    <property type="resolution" value="2.40 A"/>
    <property type="chains" value="F/G/H=99-107"/>
</dbReference>
<dbReference type="PDBsum" id="8VJN"/>
<dbReference type="PDBsum" id="8VJO"/>
<dbReference type="EMDB" id="EMD-43290"/>
<dbReference type="SMR" id="Q1D9P3"/>
<dbReference type="IntAct" id="Q1D9P3">
    <property type="interactions" value="1"/>
</dbReference>
<dbReference type="MINT" id="Q1D9P3"/>
<dbReference type="STRING" id="246197.MXAN_2410"/>
<dbReference type="TCDB" id="1.S.9.1.1">
    <property type="family name" value="the bacterial/archaeal nanocompartment encapsulin shell protein4 (banc-sp4) family"/>
</dbReference>
<dbReference type="EnsemblBacteria" id="ABF90650">
    <property type="protein sequence ID" value="ABF90650"/>
    <property type="gene ID" value="MXAN_2410"/>
</dbReference>
<dbReference type="GeneID" id="41359794"/>
<dbReference type="KEGG" id="mxa:MXAN_2410"/>
<dbReference type="HOGENOM" id="CLU_2262120_0_0_7"/>
<dbReference type="Proteomes" id="UP000002402">
    <property type="component" value="Chromosome"/>
</dbReference>
<dbReference type="GO" id="GO:0140737">
    <property type="term" value="C:encapsulin nanocompartment"/>
    <property type="evidence" value="ECO:0000314"/>
    <property type="project" value="UniProtKB"/>
</dbReference>
<dbReference type="GO" id="GO:0046872">
    <property type="term" value="F:metal ion binding"/>
    <property type="evidence" value="ECO:0007669"/>
    <property type="project" value="UniProtKB-KW"/>
</dbReference>
<dbReference type="GO" id="GO:0006879">
    <property type="term" value="P:intracellular iron ion homeostasis"/>
    <property type="evidence" value="ECO:0007669"/>
    <property type="project" value="UniProtKB-KW"/>
</dbReference>
<accession>Q1D9P3</accession>
<sequence>MAKNSNPSAFDRDFGYLMPFLDRVAAAASDLEDASARAELTRLMVEEKARWQRIQELLGGAGGRGAAAPTPAREAPAEAPRLARGSADELHEAAPFATGLTVGSLRGSR</sequence>
<evidence type="ECO:0000250" key="1">
    <source>
        <dbReference type="UniProtKB" id="Q2RVS1"/>
    </source>
</evidence>
<evidence type="ECO:0000256" key="2">
    <source>
        <dbReference type="SAM" id="MobiDB-lite"/>
    </source>
</evidence>
<evidence type="ECO:0000269" key="3">
    <source>
    </source>
</evidence>
<evidence type="ECO:0000269" key="4">
    <source>
    </source>
</evidence>
<evidence type="ECO:0000303" key="5">
    <source>
    </source>
</evidence>
<evidence type="ECO:0000305" key="6">
    <source>
    </source>
</evidence>
<evidence type="ECO:0007829" key="7">
    <source>
        <dbReference type="PDB" id="8VJN"/>
    </source>
</evidence>
<keyword id="KW-0002">3D-structure</keyword>
<keyword id="KW-1284">Encapsulin nanocompartment</keyword>
<keyword id="KW-0408">Iron</keyword>
<keyword id="KW-0409">Iron storage</keyword>
<keyword id="KW-0479">Metal-binding</keyword>
<keyword id="KW-1185">Reference proteome</keyword>
<comment type="function">
    <text evidence="3 6">Cargo protein of a type 1 encapsulin nanocompartment. May help nucleate Fe atoms in the interior of the encapsulin nanocompartment (Probable). Present in about 47 copies/encapsulin nanocompartment (PubMed:25024436).</text>
</comment>
<comment type="subcellular location">
    <subcellularLocation>
        <location evidence="3">Encapsulin nanocompartment</location>
    </subcellularLocation>
    <text evidence="6">Probably lies against the interior face of the nanocompartment.</text>
</comment>
<comment type="biotechnology">
    <text evidence="4">The encapsulin and a cargo construct (an encB-encC-encD fusion) can be overexpressed in E.coli and in human HEK293T cells. In HEK293T in the presence of 0.5 M ferrous ammonium sulfate nanocompartments can be detected and used as cell markers. Coexpression of this nanocompartment with a larger nanocompartment from Q.thermotolerans (AC A0A0F5HPP7) allows of expression of different sized iron-rich particles. The encapsulin shell proteins are not seen to mix.</text>
</comment>
<name>ENCD_MYXXD</name>
<organism>
    <name type="scientific">Myxococcus xanthus (strain DK1622)</name>
    <dbReference type="NCBI Taxonomy" id="246197"/>
    <lineage>
        <taxon>Bacteria</taxon>
        <taxon>Pseudomonadati</taxon>
        <taxon>Myxococcota</taxon>
        <taxon>Myxococcia</taxon>
        <taxon>Myxococcales</taxon>
        <taxon>Cystobacterineae</taxon>
        <taxon>Myxococcaceae</taxon>
        <taxon>Myxococcus</taxon>
    </lineage>
</organism>
<gene>
    <name evidence="5" type="primary">encD</name>
    <name type="ordered locus">MXAN_2410</name>
</gene>
<reference key="1">
    <citation type="journal article" date="2006" name="Proc. Natl. Acad. Sci. U.S.A.">
        <title>Evolution of sensory complexity recorded in a myxobacterial genome.</title>
        <authorList>
            <person name="Goldman B.S."/>
            <person name="Nierman W.C."/>
            <person name="Kaiser D."/>
            <person name="Slater S.C."/>
            <person name="Durkin A.S."/>
            <person name="Eisen J.A."/>
            <person name="Ronning C.M."/>
            <person name="Barbazuk W.B."/>
            <person name="Blanchard M."/>
            <person name="Field C."/>
            <person name="Halling C."/>
            <person name="Hinkle G."/>
            <person name="Iartchuk O."/>
            <person name="Kim H.S."/>
            <person name="Mackenzie C."/>
            <person name="Madupu R."/>
            <person name="Miller N."/>
            <person name="Shvartsbeyn A."/>
            <person name="Sullivan S.A."/>
            <person name="Vaudin M."/>
            <person name="Wiegand R."/>
            <person name="Kaplan H.B."/>
        </authorList>
    </citation>
    <scope>NUCLEOTIDE SEQUENCE [LARGE SCALE GENOMIC DNA]</scope>
    <source>
        <strain>DK1622</strain>
    </source>
</reference>
<reference key="2">
    <citation type="journal article" date="2014" name="EMBO J.">
        <title>A virus capsid-like nanocompartment that stores iron and protects bacteria from oxidative stress.</title>
        <authorList>
            <person name="McHugh C.A."/>
            <person name="Fontana J."/>
            <person name="Nemecek D."/>
            <person name="Cheng N."/>
            <person name="Aksyuk A.A."/>
            <person name="Heymann J.B."/>
            <person name="Winkler D.C."/>
            <person name="Lam A.S."/>
            <person name="Wall J.S."/>
            <person name="Steven A.C."/>
            <person name="Hoiczyk E."/>
        </authorList>
    </citation>
    <scope>IDENTIFICATION BY MASS SPECTROMETRY</scope>
    <scope>FUNCTION</scope>
    <scope>SUBCELLULAR LOCATION</scope>
    <scope>DOMAIN</scope>
    <source>
        <strain>DK1622</strain>
    </source>
</reference>
<reference key="3">
    <citation type="journal article" date="2019" name="ACS Nano">
        <title>Iron-Sequestering Nanocompartments as Multiplexed Electron Microscopy Gene Reporters.</title>
        <authorList>
            <person name="Sigmund F."/>
            <person name="Pettinger S."/>
            <person name="Kube M."/>
            <person name="Schneider F."/>
            <person name="Schifferer M."/>
            <person name="Schneider S."/>
            <person name="Efremova M.V."/>
            <person name="Pujol-Marti J."/>
            <person name="Aichler M."/>
            <person name="Walch A."/>
            <person name="Misgeld T."/>
            <person name="Dietz H."/>
            <person name="Westmeyer G.G."/>
        </authorList>
    </citation>
    <scope>FUNCTION</scope>
    <scope>SUBCELLULAR LOCATION</scope>
    <scope>BIOTECHNOLOGY</scope>
    <source>
        <strain>DK1622</strain>
    </source>
</reference>
<feature type="chain" id="PRO_0000455332" description="Encapsulin nanocompartment cargo protein EncD">
    <location>
        <begin position="1"/>
        <end position="109"/>
    </location>
</feature>
<feature type="region of interest" description="Disordered" evidence="2">
    <location>
        <begin position="61"/>
        <end position="94"/>
    </location>
</feature>
<feature type="region of interest" description="Probable targeting peptide" evidence="6">
    <location>
        <begin position="100"/>
        <end position="106"/>
    </location>
</feature>
<feature type="compositionally biased region" description="Low complexity" evidence="2">
    <location>
        <begin position="66"/>
        <end position="85"/>
    </location>
</feature>
<feature type="binding site" evidence="1">
    <location>
        <position position="47"/>
    </location>
    <ligand>
        <name>Fe cation</name>
        <dbReference type="ChEBI" id="CHEBI:24875"/>
        <label>1</label>
    </ligand>
</feature>
<feature type="binding site" evidence="1">
    <location>
        <position position="47"/>
    </location>
    <ligand>
        <name>Fe cation</name>
        <dbReference type="ChEBI" id="CHEBI:24875"/>
        <label>2</label>
    </ligand>
</feature>
<feature type="helix" evidence="7">
    <location>
        <begin position="11"/>
        <end position="28"/>
    </location>
</feature>
<feature type="helix" evidence="7">
    <location>
        <begin position="34"/>
        <end position="58"/>
    </location>
</feature>